<keyword id="KW-0963">Cytoplasm</keyword>
<keyword id="KW-0501">Molybdenum cofactor biosynthesis</keyword>
<sequence>MDIVSRQKVRRFEAGTFQEIESSVATEYPLTIYVNDQELVTIVCTPEHLEDLVVGFLTSEGIVRGPGDIDSVDIIEATGHAKVSANFVNKFNAKYRGKRYITSCCGKSRENFYFQSDASLVNVKQNSNLKLTTDRIFRLMEKFEQNSATFHQTGGVHNAALCSSAEIIYSRMDIGRHNALDKIYGRALKDGTATDDKAIIFSGRISSEILVKTAKLGCGIILSRSAPTELAINMAEELNITTVGFIRGDRLNVYSGFERIT</sequence>
<comment type="function">
    <text evidence="1">Required for formate dehydrogenase (FDH) activity. Acts as a sulfur carrier protein that transfers sulfur from IscS to the molybdenum cofactor prior to its insertion into FDH.</text>
</comment>
<comment type="subcellular location">
    <subcellularLocation>
        <location evidence="1">Cytoplasm</location>
    </subcellularLocation>
</comment>
<comment type="similarity">
    <text evidence="1">Belongs to the FdhD family.</text>
</comment>
<dbReference type="EMBL" id="AL596173">
    <property type="protein sequence ID" value="CAC97955.1"/>
    <property type="molecule type" value="Genomic_DNA"/>
</dbReference>
<dbReference type="PIR" id="AC1773">
    <property type="entry name" value="AC1773"/>
</dbReference>
<dbReference type="RefSeq" id="WP_010991356.1">
    <property type="nucleotide sequence ID" value="NC_003212.1"/>
</dbReference>
<dbReference type="SMR" id="Q927Q9"/>
<dbReference type="STRING" id="272626.gene:17567109"/>
<dbReference type="GeneID" id="93235993"/>
<dbReference type="KEGG" id="lin:lin2729"/>
<dbReference type="eggNOG" id="COG1526">
    <property type="taxonomic scope" value="Bacteria"/>
</dbReference>
<dbReference type="HOGENOM" id="CLU_056887_4_1_9"/>
<dbReference type="OrthoDB" id="9782042at2"/>
<dbReference type="Proteomes" id="UP000002513">
    <property type="component" value="Chromosome"/>
</dbReference>
<dbReference type="GO" id="GO:0005737">
    <property type="term" value="C:cytoplasm"/>
    <property type="evidence" value="ECO:0007669"/>
    <property type="project" value="UniProtKB-SubCell"/>
</dbReference>
<dbReference type="GO" id="GO:0097163">
    <property type="term" value="F:sulfur carrier activity"/>
    <property type="evidence" value="ECO:0007669"/>
    <property type="project" value="UniProtKB-UniRule"/>
</dbReference>
<dbReference type="GO" id="GO:0016783">
    <property type="term" value="F:sulfurtransferase activity"/>
    <property type="evidence" value="ECO:0007669"/>
    <property type="project" value="InterPro"/>
</dbReference>
<dbReference type="GO" id="GO:0006777">
    <property type="term" value="P:Mo-molybdopterin cofactor biosynthetic process"/>
    <property type="evidence" value="ECO:0007669"/>
    <property type="project" value="UniProtKB-UniRule"/>
</dbReference>
<dbReference type="Gene3D" id="3.10.20.10">
    <property type="match status" value="1"/>
</dbReference>
<dbReference type="Gene3D" id="3.40.140.10">
    <property type="entry name" value="Cytidine Deaminase, domain 2"/>
    <property type="match status" value="1"/>
</dbReference>
<dbReference type="HAMAP" id="MF_00187">
    <property type="entry name" value="FdhD"/>
    <property type="match status" value="1"/>
</dbReference>
<dbReference type="InterPro" id="IPR016193">
    <property type="entry name" value="Cytidine_deaminase-like"/>
</dbReference>
<dbReference type="InterPro" id="IPR003786">
    <property type="entry name" value="FdhD"/>
</dbReference>
<dbReference type="NCBIfam" id="TIGR00129">
    <property type="entry name" value="fdhD_narQ"/>
    <property type="match status" value="1"/>
</dbReference>
<dbReference type="PANTHER" id="PTHR30592">
    <property type="entry name" value="FORMATE DEHYDROGENASE"/>
    <property type="match status" value="1"/>
</dbReference>
<dbReference type="PANTHER" id="PTHR30592:SF1">
    <property type="entry name" value="SULFUR CARRIER PROTEIN FDHD"/>
    <property type="match status" value="1"/>
</dbReference>
<dbReference type="Pfam" id="PF02634">
    <property type="entry name" value="FdhD-NarQ"/>
    <property type="match status" value="1"/>
</dbReference>
<dbReference type="PIRSF" id="PIRSF015626">
    <property type="entry name" value="FdhD"/>
    <property type="match status" value="1"/>
</dbReference>
<dbReference type="SUPFAM" id="SSF53927">
    <property type="entry name" value="Cytidine deaminase-like"/>
    <property type="match status" value="1"/>
</dbReference>
<accession>Q927Q9</accession>
<evidence type="ECO:0000255" key="1">
    <source>
        <dbReference type="HAMAP-Rule" id="MF_00187"/>
    </source>
</evidence>
<gene>
    <name evidence="1" type="primary">fdhD</name>
    <name type="ordered locus">lin2729</name>
</gene>
<proteinExistence type="inferred from homology"/>
<organism>
    <name type="scientific">Listeria innocua serovar 6a (strain ATCC BAA-680 / CLIP 11262)</name>
    <dbReference type="NCBI Taxonomy" id="272626"/>
    <lineage>
        <taxon>Bacteria</taxon>
        <taxon>Bacillati</taxon>
        <taxon>Bacillota</taxon>
        <taxon>Bacilli</taxon>
        <taxon>Bacillales</taxon>
        <taxon>Listeriaceae</taxon>
        <taxon>Listeria</taxon>
    </lineage>
</organism>
<feature type="chain" id="PRO_0000152906" description="Sulfur carrier protein FdhD">
    <location>
        <begin position="1"/>
        <end position="261"/>
    </location>
</feature>
<feature type="active site" description="Cysteine persulfide intermediate" evidence="1">
    <location>
        <position position="105"/>
    </location>
</feature>
<feature type="binding site" evidence="1">
    <location>
        <begin position="245"/>
        <end position="250"/>
    </location>
    <ligand>
        <name>Mo-bis(molybdopterin guanine dinucleotide)</name>
        <dbReference type="ChEBI" id="CHEBI:60539"/>
    </ligand>
</feature>
<reference key="1">
    <citation type="journal article" date="2001" name="Science">
        <title>Comparative genomics of Listeria species.</title>
        <authorList>
            <person name="Glaser P."/>
            <person name="Frangeul L."/>
            <person name="Buchrieser C."/>
            <person name="Rusniok C."/>
            <person name="Amend A."/>
            <person name="Baquero F."/>
            <person name="Berche P."/>
            <person name="Bloecker H."/>
            <person name="Brandt P."/>
            <person name="Chakraborty T."/>
            <person name="Charbit A."/>
            <person name="Chetouani F."/>
            <person name="Couve E."/>
            <person name="de Daruvar A."/>
            <person name="Dehoux P."/>
            <person name="Domann E."/>
            <person name="Dominguez-Bernal G."/>
            <person name="Duchaud E."/>
            <person name="Durant L."/>
            <person name="Dussurget O."/>
            <person name="Entian K.-D."/>
            <person name="Fsihi H."/>
            <person name="Garcia-del Portillo F."/>
            <person name="Garrido P."/>
            <person name="Gautier L."/>
            <person name="Goebel W."/>
            <person name="Gomez-Lopez N."/>
            <person name="Hain T."/>
            <person name="Hauf J."/>
            <person name="Jackson D."/>
            <person name="Jones L.-M."/>
            <person name="Kaerst U."/>
            <person name="Kreft J."/>
            <person name="Kuhn M."/>
            <person name="Kunst F."/>
            <person name="Kurapkat G."/>
            <person name="Madueno E."/>
            <person name="Maitournam A."/>
            <person name="Mata Vicente J."/>
            <person name="Ng E."/>
            <person name="Nedjari H."/>
            <person name="Nordsiek G."/>
            <person name="Novella S."/>
            <person name="de Pablos B."/>
            <person name="Perez-Diaz J.-C."/>
            <person name="Purcell R."/>
            <person name="Remmel B."/>
            <person name="Rose M."/>
            <person name="Schlueter T."/>
            <person name="Simoes N."/>
            <person name="Tierrez A."/>
            <person name="Vazquez-Boland J.-A."/>
            <person name="Voss H."/>
            <person name="Wehland J."/>
            <person name="Cossart P."/>
        </authorList>
    </citation>
    <scope>NUCLEOTIDE SEQUENCE [LARGE SCALE GENOMIC DNA]</scope>
    <source>
        <strain>ATCC BAA-680 / CLIP 11262</strain>
    </source>
</reference>
<name>FDHD_LISIN</name>
<protein>
    <recommendedName>
        <fullName evidence="1">Sulfur carrier protein FdhD</fullName>
    </recommendedName>
</protein>